<feature type="chain" id="PRO_1000124780" description="3-dehydroquinate dehydratase">
    <location>
        <begin position="1"/>
        <end position="255"/>
    </location>
</feature>
<feature type="active site" description="Proton donor/acceptor" evidence="1">
    <location>
        <position position="145"/>
    </location>
</feature>
<feature type="active site" description="Schiff-base intermediate with substrate" evidence="1">
    <location>
        <position position="172"/>
    </location>
</feature>
<feature type="binding site" evidence="1">
    <location>
        <begin position="47"/>
        <end position="49"/>
    </location>
    <ligand>
        <name>3-dehydroquinate</name>
        <dbReference type="ChEBI" id="CHEBI:32364"/>
    </ligand>
</feature>
<feature type="binding site" evidence="1">
    <location>
        <position position="83"/>
    </location>
    <ligand>
        <name>3-dehydroquinate</name>
        <dbReference type="ChEBI" id="CHEBI:32364"/>
    </ligand>
</feature>
<feature type="binding site" evidence="1">
    <location>
        <position position="215"/>
    </location>
    <ligand>
        <name>3-dehydroquinate</name>
        <dbReference type="ChEBI" id="CHEBI:32364"/>
    </ligand>
</feature>
<feature type="binding site" evidence="1">
    <location>
        <position position="234"/>
    </location>
    <ligand>
        <name>3-dehydroquinate</name>
        <dbReference type="ChEBI" id="CHEBI:32364"/>
    </ligand>
</feature>
<feature type="binding site" evidence="1">
    <location>
        <position position="238"/>
    </location>
    <ligand>
        <name>3-dehydroquinate</name>
        <dbReference type="ChEBI" id="CHEBI:32364"/>
    </ligand>
</feature>
<organism>
    <name type="scientific">Clostridium kluyveri (strain NBRC 12016)</name>
    <dbReference type="NCBI Taxonomy" id="583346"/>
    <lineage>
        <taxon>Bacteria</taxon>
        <taxon>Bacillati</taxon>
        <taxon>Bacillota</taxon>
        <taxon>Clostridia</taxon>
        <taxon>Eubacteriales</taxon>
        <taxon>Clostridiaceae</taxon>
        <taxon>Clostridium</taxon>
    </lineage>
</organism>
<accession>B9E0D7</accession>
<evidence type="ECO:0000255" key="1">
    <source>
        <dbReference type="HAMAP-Rule" id="MF_00214"/>
    </source>
</evidence>
<keyword id="KW-0028">Amino-acid biosynthesis</keyword>
<keyword id="KW-0057">Aromatic amino acid biosynthesis</keyword>
<keyword id="KW-0456">Lyase</keyword>
<keyword id="KW-0704">Schiff base</keyword>
<dbReference type="EC" id="4.2.1.10" evidence="1"/>
<dbReference type="EMBL" id="AP009049">
    <property type="protein sequence ID" value="BAH05962.1"/>
    <property type="molecule type" value="Genomic_DNA"/>
</dbReference>
<dbReference type="RefSeq" id="WP_012101381.1">
    <property type="nucleotide sequence ID" value="NC_011837.1"/>
</dbReference>
<dbReference type="SMR" id="B9E0D7"/>
<dbReference type="KEGG" id="ckr:CKR_0911"/>
<dbReference type="HOGENOM" id="CLU_064444_0_0_9"/>
<dbReference type="UniPathway" id="UPA00053">
    <property type="reaction ID" value="UER00086"/>
</dbReference>
<dbReference type="Proteomes" id="UP000007969">
    <property type="component" value="Chromosome"/>
</dbReference>
<dbReference type="GO" id="GO:0003855">
    <property type="term" value="F:3-dehydroquinate dehydratase activity"/>
    <property type="evidence" value="ECO:0007669"/>
    <property type="project" value="UniProtKB-UniRule"/>
</dbReference>
<dbReference type="GO" id="GO:0046279">
    <property type="term" value="P:3,4-dihydroxybenzoate biosynthetic process"/>
    <property type="evidence" value="ECO:0007669"/>
    <property type="project" value="TreeGrafter"/>
</dbReference>
<dbReference type="GO" id="GO:0008652">
    <property type="term" value="P:amino acid biosynthetic process"/>
    <property type="evidence" value="ECO:0007669"/>
    <property type="project" value="UniProtKB-KW"/>
</dbReference>
<dbReference type="GO" id="GO:0009073">
    <property type="term" value="P:aromatic amino acid family biosynthetic process"/>
    <property type="evidence" value="ECO:0007669"/>
    <property type="project" value="UniProtKB-KW"/>
</dbReference>
<dbReference type="GO" id="GO:0009423">
    <property type="term" value="P:chorismate biosynthetic process"/>
    <property type="evidence" value="ECO:0007669"/>
    <property type="project" value="UniProtKB-UniRule"/>
</dbReference>
<dbReference type="CDD" id="cd00502">
    <property type="entry name" value="DHQase_I"/>
    <property type="match status" value="1"/>
</dbReference>
<dbReference type="FunFam" id="3.20.20.70:FF:000047">
    <property type="entry name" value="3-dehydroquinate dehydratase"/>
    <property type="match status" value="1"/>
</dbReference>
<dbReference type="Gene3D" id="3.20.20.70">
    <property type="entry name" value="Aldolase class I"/>
    <property type="match status" value="1"/>
</dbReference>
<dbReference type="HAMAP" id="MF_00214">
    <property type="entry name" value="AroD"/>
    <property type="match status" value="1"/>
</dbReference>
<dbReference type="InterPro" id="IPR013785">
    <property type="entry name" value="Aldolase_TIM"/>
</dbReference>
<dbReference type="InterPro" id="IPR001381">
    <property type="entry name" value="DHquinase_I"/>
</dbReference>
<dbReference type="InterPro" id="IPR050146">
    <property type="entry name" value="Type-I_3-dehydroquinase"/>
</dbReference>
<dbReference type="NCBIfam" id="TIGR01093">
    <property type="entry name" value="aroD"/>
    <property type="match status" value="1"/>
</dbReference>
<dbReference type="PANTHER" id="PTHR43699">
    <property type="entry name" value="3-DEHYDROQUINATE DEHYDRATASE"/>
    <property type="match status" value="1"/>
</dbReference>
<dbReference type="PANTHER" id="PTHR43699:SF1">
    <property type="entry name" value="3-DEHYDROQUINATE DEHYDRATASE"/>
    <property type="match status" value="1"/>
</dbReference>
<dbReference type="Pfam" id="PF01487">
    <property type="entry name" value="DHquinase_I"/>
    <property type="match status" value="1"/>
</dbReference>
<dbReference type="SUPFAM" id="SSF51569">
    <property type="entry name" value="Aldolase"/>
    <property type="match status" value="1"/>
</dbReference>
<sequence length="255" mass="28536">MGSIVKIRDVKLGEGIPKIAVPLVGSNEEEIMEEIAGVKTTKLDIVEWRIDYYKYVEEVEKVKKLLQKMRKNLNNIPILVTFRTAKEGGKREISLEYYIELNKAIAATGNTDMIDIELFAAEDEAVKKIVEELHEYNIKVIMSNHDFHKTPHKDELISRMCRMQQLGADIAKIAVMPCSTKDVLELLSATCEMKCKHNDTPIITMSMGTLGVITRLAGETFGSALTFGSAKAASAPGQLEVNELYKVLKLISAYR</sequence>
<gene>
    <name evidence="1" type="primary">aroD</name>
    <name type="ordered locus">CKR_0911</name>
</gene>
<proteinExistence type="inferred from homology"/>
<comment type="function">
    <text evidence="1">Involved in the third step of the chorismate pathway, which leads to the biosynthesis of aromatic amino acids. Catalyzes the cis-dehydration of 3-dehydroquinate (DHQ) and introduces the first double bond of the aromatic ring to yield 3-dehydroshikimate.</text>
</comment>
<comment type="catalytic activity">
    <reaction evidence="1">
        <text>3-dehydroquinate = 3-dehydroshikimate + H2O</text>
        <dbReference type="Rhea" id="RHEA:21096"/>
        <dbReference type="ChEBI" id="CHEBI:15377"/>
        <dbReference type="ChEBI" id="CHEBI:16630"/>
        <dbReference type="ChEBI" id="CHEBI:32364"/>
        <dbReference type="EC" id="4.2.1.10"/>
    </reaction>
</comment>
<comment type="pathway">
    <text evidence="1">Metabolic intermediate biosynthesis; chorismate biosynthesis; chorismate from D-erythrose 4-phosphate and phosphoenolpyruvate: step 3/7.</text>
</comment>
<comment type="subunit">
    <text evidence="1">Homodimer.</text>
</comment>
<comment type="similarity">
    <text evidence="1">Belongs to the type-I 3-dehydroquinase family.</text>
</comment>
<name>AROD_CLOK1</name>
<reference key="1">
    <citation type="submission" date="2005-09" db="EMBL/GenBank/DDBJ databases">
        <title>Complete genome sequence of Clostridium kluyveri and comparative genomics of Clostridia species.</title>
        <authorList>
            <person name="Inui M."/>
            <person name="Nonaka H."/>
            <person name="Shinoda Y."/>
            <person name="Ikenaga Y."/>
            <person name="Abe M."/>
            <person name="Naito K."/>
            <person name="Vertes A.A."/>
            <person name="Yukawa H."/>
        </authorList>
    </citation>
    <scope>NUCLEOTIDE SEQUENCE [LARGE SCALE GENOMIC DNA]</scope>
    <source>
        <strain>NBRC 12016</strain>
    </source>
</reference>
<protein>
    <recommendedName>
        <fullName evidence="1">3-dehydroquinate dehydratase</fullName>
        <shortName evidence="1">3-dehydroquinase</shortName>
        <ecNumber evidence="1">4.2.1.10</ecNumber>
    </recommendedName>
    <alternativeName>
        <fullName evidence="1">Type I DHQase</fullName>
    </alternativeName>
    <alternativeName>
        <fullName evidence="1">Type I dehydroquinase</fullName>
        <shortName evidence="1">DHQ1</shortName>
    </alternativeName>
</protein>